<gene>
    <name type="primary">Zfp57</name>
</gene>
<accession>Q8C6P8</accession>
<accession>Q3UT94</accession>
<accession>Q62515</accession>
<accession>Q6JPI1</accession>
<sequence>MAARKQSSQPSRTPVSYEDVAVSFTQEEWEYLTSTQKTLYQKVMSETFKNLTFVGSKKKPQEPSSDLQDKNEEQEKSSSCTGVFKGGPFFFCLTCGKCFKKNTFLFNHQFPVRSRRLAVTNPQSRKGKGYKAQHRGERPFFCNFCGKTYRDASGLSRHRRAHLGYRPRSCPECGKCFRDQSEVNRHLKVHQNKPAASNQAGNQASNQRLKSRVPPTTPRSQAPALKYVKVIQGPVARAKARNSGASTLNVRSNSITVVRSREKISCPYCHITFTMRTCLLTHLKIHFRRQPNQHFCCKESAHSSNTLRMQKIYTCPVCDSSFRGKESLLDHLCCQRPIRFSKCWEILGHLLGYLHEPVVLGNIFKVRDSSGKRMESRRRRRKRACTENPETEGLSGKGRVAPWEMEGATSPESPVTEEDSD</sequence>
<comment type="function">
    <text evidence="5 9 10 11">Transcription regulator required to maintain maternal and paternal gene imprinting, a process by which gene expression is restricted in a parent of origin-specific manner by epigenetic modification of genomic DNA and chromatin, including DNA methylation. Acts by controlling DNA methylation during the earliest multicellular stages of development at multiple imprinting control regions (ICRs) (PubMed:15070898, PubMed:18854139, PubMed:23059534, PubMed:30602440). Acts together with ZNF445, but ZFP57 plays the predominant role in imprinting maintenance. In contrast, in humans, ZNF445 seems to be the major factor early embryonic imprinting maintenance (PubMed:30602440). Required for the establishment of maternal methylation imprints at SNRPN locus. Acts as a transcriptional repressor in Schwann cells. Binds to a 5'-TGCCGC-3' consensus sequence and recognizes the methylated CpG within this element (PubMed:15070898, PubMed:18854139, PubMed:23059534).</text>
</comment>
<comment type="subcellular location">
    <subcellularLocation>
        <location evidence="5 9 12">Nucleus</location>
    </subcellularLocation>
    <text>Binds various differentially methylated regions (DMR), including the Snrpn DMR.</text>
</comment>
<comment type="alternative products">
    <event type="alternative splicing"/>
    <isoform>
        <id>Q8C6P8-1</id>
        <name>1</name>
        <sequence type="displayed"/>
    </isoform>
    <isoform>
        <id>Q8C6P8-2</id>
        <name>2</name>
        <sequence type="described" ref="VSP_026331"/>
    </isoform>
</comment>
<comment type="tissue specificity">
    <text evidence="5 12">Expressed in oocytes and in a subset of adult tissues. Expressed at high levels in testis, and at low levels in cerebellum. Present in sciatic nerve and spinal cord (at protein level).</text>
</comment>
<comment type="developmental stage">
    <text evidence="5 8 9 12">Expression peaks between 11 dpc and 17 dpc, and decreases from P0 to P28. Expressed in lung throughout embryonic development. At 12 dpc, expressed in spinal cord, dorsal root ganglia and sciatic nerve. At 15 dpc, highly expressed in all neural tissues. At P0, expressed in brain and spinal cord. Present in Schwann cells at 16 dpc and P0 (at protein level). Maternal product is present in preimplantation embryos. Expressed in pluripotent embryonic stem cells. Down-regulated when embryonic stem cells differentiate.</text>
</comment>
<comment type="induction">
    <text evidence="4 5 6 7 12">Up-regulated by LIF. Down-regulated during differentiation of embryonic stem cells, or during retinoic acid-induced differentiation of F9 cells (at protein level). Regulated by JMJD1A, which mediates histone H3K9Me2 demethylation at its promoter, thereby activating expression.</text>
</comment>
<comment type="domain">
    <text>The KRAB domain is required for function as transcriptional repressor.</text>
</comment>
<comment type="domain">
    <text>Zinc fingers 2 and 3 mediate recognition of the target element, ZF2 interacting with the 5' half (TGC) and ZF3 interacting with the 3' half (CGC).</text>
</comment>
<comment type="disruption phenotype">
    <text evidence="9 11">Affects the maintenance of DNA methylation imprints. The absence of just the zygotic function causes partial neonatal lethality, whereas eliminating both the maternal and zygotic functions results in a highly penetrant embryonic lethality. In oocytes, its absence results in failure to establish maternal methylation imprints at the Snrpn imprinted region. Intriguingly, methylation imprints are reacquired specifically at the maternally derived Snrpn imprinted region when the zygotic Zfp57 is present in embryos (PubMed:18854139, PubMed:30602440). Double zygotic mutations of ZFP57 and ZNF445 are embryonically lethal and embryos show no gross morphological abnormalities but significant reduction in size and weight at 11.5 dpc, a phenotype more pronounced than in ZFP57 mutant mice with a more severe loss of impinting (PubMed:30602440).</text>
</comment>
<comment type="similarity">
    <text evidence="14">Belongs to the krueppel C2H2-type zinc-finger protein family.</text>
</comment>
<comment type="sequence caution" evidence="14">
    <conflict type="miscellaneous discrepancy">
        <sequence resource="EMBL-CDS" id="AAR04560"/>
    </conflict>
    <text>Numerous sequencing errors.</text>
</comment>
<evidence type="ECO:0000255" key="1">
    <source>
        <dbReference type="PROSITE-ProRule" id="PRU00042"/>
    </source>
</evidence>
<evidence type="ECO:0000255" key="2">
    <source>
        <dbReference type="PROSITE-ProRule" id="PRU00119"/>
    </source>
</evidence>
<evidence type="ECO:0000256" key="3">
    <source>
        <dbReference type="SAM" id="MobiDB-lite"/>
    </source>
</evidence>
<evidence type="ECO:0000269" key="4">
    <source>
    </source>
</evidence>
<evidence type="ECO:0000269" key="5">
    <source>
    </source>
</evidence>
<evidence type="ECO:0000269" key="6">
    <source>
    </source>
</evidence>
<evidence type="ECO:0000269" key="7">
    <source>
    </source>
</evidence>
<evidence type="ECO:0000269" key="8">
    <source>
    </source>
</evidence>
<evidence type="ECO:0000269" key="9">
    <source>
    </source>
</evidence>
<evidence type="ECO:0000269" key="10">
    <source>
    </source>
</evidence>
<evidence type="ECO:0000269" key="11">
    <source>
    </source>
</evidence>
<evidence type="ECO:0000269" key="12">
    <source>
    </source>
</evidence>
<evidence type="ECO:0000303" key="13">
    <source>
    </source>
</evidence>
<evidence type="ECO:0000305" key="14"/>
<evidence type="ECO:0007829" key="15">
    <source>
        <dbReference type="PDB" id="4M9V"/>
    </source>
</evidence>
<proteinExistence type="evidence at protein level"/>
<organism>
    <name type="scientific">Mus musculus</name>
    <name type="common">Mouse</name>
    <dbReference type="NCBI Taxonomy" id="10090"/>
    <lineage>
        <taxon>Eukaryota</taxon>
        <taxon>Metazoa</taxon>
        <taxon>Chordata</taxon>
        <taxon>Craniata</taxon>
        <taxon>Vertebrata</taxon>
        <taxon>Euteleostomi</taxon>
        <taxon>Mammalia</taxon>
        <taxon>Eutheria</taxon>
        <taxon>Euarchontoglires</taxon>
        <taxon>Glires</taxon>
        <taxon>Rodentia</taxon>
        <taxon>Myomorpha</taxon>
        <taxon>Muroidea</taxon>
        <taxon>Muridae</taxon>
        <taxon>Murinae</taxon>
        <taxon>Mus</taxon>
        <taxon>Mus</taxon>
    </lineage>
</organism>
<dbReference type="EMBL" id="D21850">
    <property type="protein sequence ID" value="BAA04876.1"/>
    <property type="molecule type" value="mRNA"/>
</dbReference>
<dbReference type="EMBL" id="AY344233">
    <property type="protein sequence ID" value="AAR04560.1"/>
    <property type="status" value="ALT_SEQ"/>
    <property type="molecule type" value="mRNA"/>
</dbReference>
<dbReference type="EMBL" id="AK054083">
    <property type="protein sequence ID" value="BAC35649.1"/>
    <property type="molecule type" value="mRNA"/>
</dbReference>
<dbReference type="EMBL" id="AK136241">
    <property type="protein sequence ID" value="BAE22892.1"/>
    <property type="molecule type" value="mRNA"/>
</dbReference>
<dbReference type="EMBL" id="AK139625">
    <property type="protein sequence ID" value="BAE24086.1"/>
    <property type="molecule type" value="mRNA"/>
</dbReference>
<dbReference type="EMBL" id="AK145368">
    <property type="protein sequence ID" value="BAE26393.1"/>
    <property type="molecule type" value="mRNA"/>
</dbReference>
<dbReference type="EMBL" id="BC052028">
    <property type="protein sequence ID" value="AAH52028.1"/>
    <property type="molecule type" value="mRNA"/>
</dbReference>
<dbReference type="CCDS" id="CCDS28733.1">
    <molecule id="Q8C6P8-1"/>
</dbReference>
<dbReference type="CCDS" id="CCDS50106.1">
    <molecule id="Q8C6P8-2"/>
</dbReference>
<dbReference type="PIR" id="A54375">
    <property type="entry name" value="A54375"/>
</dbReference>
<dbReference type="RefSeq" id="NP_001013767.1">
    <molecule id="Q8C6P8-1"/>
    <property type="nucleotide sequence ID" value="NM_001013745.2"/>
</dbReference>
<dbReference type="RefSeq" id="NP_001161973.1">
    <molecule id="Q8C6P8-1"/>
    <property type="nucleotide sequence ID" value="NM_001168501.1"/>
</dbReference>
<dbReference type="RefSeq" id="NP_001161974.1">
    <molecule id="Q8C6P8-2"/>
    <property type="nucleotide sequence ID" value="NM_001168502.1"/>
</dbReference>
<dbReference type="RefSeq" id="XP_006524287.1">
    <property type="nucleotide sequence ID" value="XM_006524224.1"/>
</dbReference>
<dbReference type="RefSeq" id="XP_017172947.1">
    <property type="nucleotide sequence ID" value="XM_017317458.1"/>
</dbReference>
<dbReference type="RefSeq" id="XP_017172948.1">
    <property type="nucleotide sequence ID" value="XM_017317459.1"/>
</dbReference>
<dbReference type="RefSeq" id="XP_036016475.1">
    <molecule id="Q8C6P8-1"/>
    <property type="nucleotide sequence ID" value="XM_036160582.1"/>
</dbReference>
<dbReference type="RefSeq" id="XP_036016476.1">
    <molecule id="Q8C6P8-2"/>
    <property type="nucleotide sequence ID" value="XM_036160583.1"/>
</dbReference>
<dbReference type="RefSeq" id="XP_036016477.1">
    <molecule id="Q8C6P8-2"/>
    <property type="nucleotide sequence ID" value="XM_036160584.1"/>
</dbReference>
<dbReference type="PDB" id="4GZN">
    <property type="method" value="X-ray"/>
    <property type="resolution" value="0.99 A"/>
    <property type="chains" value="C=137-195"/>
</dbReference>
<dbReference type="PDB" id="4M9V">
    <property type="method" value="X-ray"/>
    <property type="resolution" value="0.97 A"/>
    <property type="chains" value="C/F=137-195"/>
</dbReference>
<dbReference type="PDBsum" id="4GZN"/>
<dbReference type="PDBsum" id="4M9V"/>
<dbReference type="SMR" id="Q8C6P8"/>
<dbReference type="BioGRID" id="204670">
    <property type="interactions" value="9"/>
</dbReference>
<dbReference type="CORUM" id="Q8C6P8"/>
<dbReference type="FunCoup" id="Q8C6P8">
    <property type="interactions" value="87"/>
</dbReference>
<dbReference type="STRING" id="10090.ENSMUSP00000133821"/>
<dbReference type="GlyGen" id="Q8C6P8">
    <property type="glycosylation" value="1 site, 1 O-linked glycan (1 site)"/>
</dbReference>
<dbReference type="iPTMnet" id="Q8C6P8"/>
<dbReference type="PhosphoSitePlus" id="Q8C6P8"/>
<dbReference type="PaxDb" id="10090-ENSMUSP00000065811"/>
<dbReference type="PeptideAtlas" id="Q8C6P8"/>
<dbReference type="ProteomicsDB" id="275358">
    <molecule id="Q8C6P8-1"/>
</dbReference>
<dbReference type="ProteomicsDB" id="275359">
    <molecule id="Q8C6P8-2"/>
</dbReference>
<dbReference type="Pumba" id="Q8C6P8"/>
<dbReference type="Antibodypedia" id="26080">
    <property type="antibodies" value="216 antibodies from 19 providers"/>
</dbReference>
<dbReference type="DNASU" id="22715"/>
<dbReference type="Ensembl" id="ENSMUST00000069250.14">
    <molecule id="Q8C6P8-1"/>
    <property type="protein sequence ID" value="ENSMUSP00000065811.8"/>
    <property type="gene ID" value="ENSMUSG00000036036.16"/>
</dbReference>
<dbReference type="Ensembl" id="ENSMUST00000089968.13">
    <molecule id="Q8C6P8-2"/>
    <property type="protein sequence ID" value="ENSMUSP00000087414.7"/>
    <property type="gene ID" value="ENSMUSG00000036036.16"/>
</dbReference>
<dbReference type="Ensembl" id="ENSMUST00000174524.8">
    <molecule id="Q8C6P8-1"/>
    <property type="protein sequence ID" value="ENSMUSP00000134418.2"/>
    <property type="gene ID" value="ENSMUSG00000036036.16"/>
</dbReference>
<dbReference type="Ensembl" id="ENSMUST00000174672.2">
    <molecule id="Q8C6P8-1"/>
    <property type="protein sequence ID" value="ENSMUSP00000133821.2"/>
    <property type="gene ID" value="ENSMUSG00000036036.16"/>
</dbReference>
<dbReference type="GeneID" id="22715"/>
<dbReference type="KEGG" id="mmu:22715"/>
<dbReference type="UCSC" id="uc008clu.2">
    <molecule id="Q8C6P8-2"/>
    <property type="organism name" value="mouse"/>
</dbReference>
<dbReference type="UCSC" id="uc008clv.2">
    <molecule id="Q8C6P8-1"/>
    <property type="organism name" value="mouse"/>
</dbReference>
<dbReference type="AGR" id="MGI:99204"/>
<dbReference type="CTD" id="346171"/>
<dbReference type="MGI" id="MGI:99204">
    <property type="gene designation" value="Zfp57"/>
</dbReference>
<dbReference type="VEuPathDB" id="HostDB:ENSMUSG00000036036"/>
<dbReference type="eggNOG" id="KOG1721">
    <property type="taxonomic scope" value="Eukaryota"/>
</dbReference>
<dbReference type="GeneTree" id="ENSGT00390000002599"/>
<dbReference type="HOGENOM" id="CLU_677857_0_0_1"/>
<dbReference type="InParanoid" id="Q8C6P8"/>
<dbReference type="OMA" id="MARIQEP"/>
<dbReference type="OrthoDB" id="6155966at2759"/>
<dbReference type="PhylomeDB" id="Q8C6P8"/>
<dbReference type="TreeFam" id="TF337947"/>
<dbReference type="BioGRID-ORCS" id="22715">
    <property type="hits" value="4 hits in 80 CRISPR screens"/>
</dbReference>
<dbReference type="ChiTaRS" id="Zfp57">
    <property type="organism name" value="mouse"/>
</dbReference>
<dbReference type="PRO" id="PR:Q8C6P8"/>
<dbReference type="Proteomes" id="UP000000589">
    <property type="component" value="Chromosome 17"/>
</dbReference>
<dbReference type="RNAct" id="Q8C6P8">
    <property type="molecule type" value="protein"/>
</dbReference>
<dbReference type="Bgee" id="ENSMUSG00000036036">
    <property type="expression patterns" value="Expressed in cortical plate and 138 other cell types or tissues"/>
</dbReference>
<dbReference type="ExpressionAtlas" id="Q8C6P8">
    <property type="expression patterns" value="baseline and differential"/>
</dbReference>
<dbReference type="GO" id="GO:0000792">
    <property type="term" value="C:heterochromatin"/>
    <property type="evidence" value="ECO:0000314"/>
    <property type="project" value="MGI"/>
</dbReference>
<dbReference type="GO" id="GO:0005634">
    <property type="term" value="C:nucleus"/>
    <property type="evidence" value="ECO:0000314"/>
    <property type="project" value="UniProtKB"/>
</dbReference>
<dbReference type="GO" id="GO:0003682">
    <property type="term" value="F:chromatin binding"/>
    <property type="evidence" value="ECO:0000314"/>
    <property type="project" value="UniProtKB"/>
</dbReference>
<dbReference type="GO" id="GO:0003677">
    <property type="term" value="F:DNA binding"/>
    <property type="evidence" value="ECO:0000314"/>
    <property type="project" value="MGI"/>
</dbReference>
<dbReference type="GO" id="GO:0010385">
    <property type="term" value="F:double-stranded methylated DNA binding"/>
    <property type="evidence" value="ECO:0000314"/>
    <property type="project" value="UniProtKB"/>
</dbReference>
<dbReference type="GO" id="GO:0008270">
    <property type="term" value="F:zinc ion binding"/>
    <property type="evidence" value="ECO:0007669"/>
    <property type="project" value="UniProtKB-KW"/>
</dbReference>
<dbReference type="GO" id="GO:0141068">
    <property type="term" value="P:autosome genomic imprinting"/>
    <property type="evidence" value="ECO:0000315"/>
    <property type="project" value="UniProtKB"/>
</dbReference>
<dbReference type="GO" id="GO:0044726">
    <property type="term" value="P:epigenetic programing of female pronucleus"/>
    <property type="evidence" value="ECO:0000316"/>
    <property type="project" value="UniProtKB"/>
</dbReference>
<dbReference type="GO" id="GO:0044725">
    <property type="term" value="P:epigenetic programming in the zygotic pronuclei"/>
    <property type="evidence" value="ECO:0000315"/>
    <property type="project" value="MGI"/>
</dbReference>
<dbReference type="GO" id="GO:0071514">
    <property type="term" value="P:genomic imprinting"/>
    <property type="evidence" value="ECO:0000315"/>
    <property type="project" value="MGI"/>
</dbReference>
<dbReference type="GO" id="GO:0044027">
    <property type="term" value="P:negative regulation of gene expression via chromosomal CpG island methylation"/>
    <property type="evidence" value="ECO:0000316"/>
    <property type="project" value="UniProtKB"/>
</dbReference>
<dbReference type="GO" id="GO:0000122">
    <property type="term" value="P:negative regulation of transcription by RNA polymerase II"/>
    <property type="evidence" value="ECO:0000314"/>
    <property type="project" value="MGI"/>
</dbReference>
<dbReference type="CDD" id="cd07765">
    <property type="entry name" value="KRAB_A-box"/>
    <property type="match status" value="1"/>
</dbReference>
<dbReference type="FunFam" id="3.30.160.60:FF:000100">
    <property type="entry name" value="Zinc finger 45-like"/>
    <property type="match status" value="1"/>
</dbReference>
<dbReference type="FunFam" id="3.30.160.60:FF:001370">
    <property type="entry name" value="Zinc finger protein"/>
    <property type="match status" value="1"/>
</dbReference>
<dbReference type="Gene3D" id="6.10.140.140">
    <property type="match status" value="1"/>
</dbReference>
<dbReference type="Gene3D" id="3.30.160.60">
    <property type="entry name" value="Classic Zinc Finger"/>
    <property type="match status" value="1"/>
</dbReference>
<dbReference type="InterPro" id="IPR001909">
    <property type="entry name" value="KRAB"/>
</dbReference>
<dbReference type="InterPro" id="IPR036051">
    <property type="entry name" value="KRAB_dom_sf"/>
</dbReference>
<dbReference type="InterPro" id="IPR036236">
    <property type="entry name" value="Znf_C2H2_sf"/>
</dbReference>
<dbReference type="InterPro" id="IPR013087">
    <property type="entry name" value="Znf_C2H2_type"/>
</dbReference>
<dbReference type="PANTHER" id="PTHR24381">
    <property type="entry name" value="ZINC FINGER PROTEIN"/>
    <property type="match status" value="1"/>
</dbReference>
<dbReference type="PANTHER" id="PTHR24381:SF436">
    <property type="entry name" value="ZINC FINGER PROTEIN 768"/>
    <property type="match status" value="1"/>
</dbReference>
<dbReference type="Pfam" id="PF01352">
    <property type="entry name" value="KRAB"/>
    <property type="match status" value="1"/>
</dbReference>
<dbReference type="Pfam" id="PF00096">
    <property type="entry name" value="zf-C2H2"/>
    <property type="match status" value="2"/>
</dbReference>
<dbReference type="SMART" id="SM00349">
    <property type="entry name" value="KRAB"/>
    <property type="match status" value="1"/>
</dbReference>
<dbReference type="SMART" id="SM00355">
    <property type="entry name" value="ZnF_C2H2"/>
    <property type="match status" value="4"/>
</dbReference>
<dbReference type="SUPFAM" id="SSF57667">
    <property type="entry name" value="beta-beta-alpha zinc fingers"/>
    <property type="match status" value="1"/>
</dbReference>
<dbReference type="SUPFAM" id="SSF109640">
    <property type="entry name" value="KRAB domain (Kruppel-associated box)"/>
    <property type="match status" value="1"/>
</dbReference>
<dbReference type="PROSITE" id="PS50805">
    <property type="entry name" value="KRAB"/>
    <property type="match status" value="1"/>
</dbReference>
<dbReference type="PROSITE" id="PS00028">
    <property type="entry name" value="ZINC_FINGER_C2H2_1"/>
    <property type="match status" value="3"/>
</dbReference>
<dbReference type="PROSITE" id="PS50157">
    <property type="entry name" value="ZINC_FINGER_C2H2_2"/>
    <property type="match status" value="4"/>
</dbReference>
<reference key="1">
    <citation type="journal article" date="1994" name="J. Biol. Chem.">
        <title>A novel nuclear protein with zinc fingers down-regulated during early mammalian cell differentiation.</title>
        <authorList>
            <person name="Okazaki S."/>
            <person name="Tanase S."/>
            <person name="Choudhury B.K."/>
            <person name="Setoyama K."/>
            <person name="Miura R."/>
            <person name="Ogawa M."/>
            <person name="Setoyama C."/>
        </authorList>
    </citation>
    <scope>NUCLEOTIDE SEQUENCE [MRNA] (ISOFORM 1)</scope>
    <scope>TISSUE SPECIFICITY</scope>
    <scope>DEVELOPMENTAL STAGE</scope>
    <scope>SUBCELLULAR LOCATION</scope>
    <scope>INDUCTION</scope>
    <source>
        <strain>129</strain>
        <tissue>Testis</tissue>
    </source>
</reference>
<reference key="2">
    <citation type="journal article" date="2004" name="J. Biol. Chem.">
        <title>Identification and characterization of ZFP-57, a novel zinc finger transcription factor in the mammalian peripheral nervous system.</title>
        <authorList>
            <person name="Alonso M.B."/>
            <person name="Zoidl G."/>
            <person name="Taveggia C."/>
            <person name="Bosse F."/>
            <person name="Zoidl C."/>
            <person name="Rahman M."/>
            <person name="Parmantier E."/>
            <person name="Dean C.H."/>
            <person name="Harris B.S."/>
            <person name="Wrabetz L."/>
            <person name="Mueller H.W."/>
            <person name="Jessen K.R."/>
            <person name="Mirsky R."/>
        </authorList>
    </citation>
    <scope>NUCLEOTIDE SEQUENCE [MRNA] (ISOFORM 1)</scope>
    <scope>FUNCTION</scope>
    <scope>TISSUE SPECIFICITY</scope>
    <scope>DEVELOPMENTAL STAGE</scope>
    <scope>SUBCELLULAR LOCATION</scope>
    <scope>INDUCTION BY LIF</scope>
    <source>
        <tissue>Embryonic stem cell</tissue>
        <tissue>Testis</tissue>
    </source>
</reference>
<reference key="3">
    <citation type="journal article" date="2005" name="Science">
        <title>The transcriptional landscape of the mammalian genome.</title>
        <authorList>
            <person name="Carninci P."/>
            <person name="Kasukawa T."/>
            <person name="Katayama S."/>
            <person name="Gough J."/>
            <person name="Frith M.C."/>
            <person name="Maeda N."/>
            <person name="Oyama R."/>
            <person name="Ravasi T."/>
            <person name="Lenhard B."/>
            <person name="Wells C."/>
            <person name="Kodzius R."/>
            <person name="Shimokawa K."/>
            <person name="Bajic V.B."/>
            <person name="Brenner S.E."/>
            <person name="Batalov S."/>
            <person name="Forrest A.R."/>
            <person name="Zavolan M."/>
            <person name="Davis M.J."/>
            <person name="Wilming L.G."/>
            <person name="Aidinis V."/>
            <person name="Allen J.E."/>
            <person name="Ambesi-Impiombato A."/>
            <person name="Apweiler R."/>
            <person name="Aturaliya R.N."/>
            <person name="Bailey T.L."/>
            <person name="Bansal M."/>
            <person name="Baxter L."/>
            <person name="Beisel K.W."/>
            <person name="Bersano T."/>
            <person name="Bono H."/>
            <person name="Chalk A.M."/>
            <person name="Chiu K.P."/>
            <person name="Choudhary V."/>
            <person name="Christoffels A."/>
            <person name="Clutterbuck D.R."/>
            <person name="Crowe M.L."/>
            <person name="Dalla E."/>
            <person name="Dalrymple B.P."/>
            <person name="de Bono B."/>
            <person name="Della Gatta G."/>
            <person name="di Bernardo D."/>
            <person name="Down T."/>
            <person name="Engstrom P."/>
            <person name="Fagiolini M."/>
            <person name="Faulkner G."/>
            <person name="Fletcher C.F."/>
            <person name="Fukushima T."/>
            <person name="Furuno M."/>
            <person name="Futaki S."/>
            <person name="Gariboldi M."/>
            <person name="Georgii-Hemming P."/>
            <person name="Gingeras T.R."/>
            <person name="Gojobori T."/>
            <person name="Green R.E."/>
            <person name="Gustincich S."/>
            <person name="Harbers M."/>
            <person name="Hayashi Y."/>
            <person name="Hensch T.K."/>
            <person name="Hirokawa N."/>
            <person name="Hill D."/>
            <person name="Huminiecki L."/>
            <person name="Iacono M."/>
            <person name="Ikeo K."/>
            <person name="Iwama A."/>
            <person name="Ishikawa T."/>
            <person name="Jakt M."/>
            <person name="Kanapin A."/>
            <person name="Katoh M."/>
            <person name="Kawasawa Y."/>
            <person name="Kelso J."/>
            <person name="Kitamura H."/>
            <person name="Kitano H."/>
            <person name="Kollias G."/>
            <person name="Krishnan S.P."/>
            <person name="Kruger A."/>
            <person name="Kummerfeld S.K."/>
            <person name="Kurochkin I.V."/>
            <person name="Lareau L.F."/>
            <person name="Lazarevic D."/>
            <person name="Lipovich L."/>
            <person name="Liu J."/>
            <person name="Liuni S."/>
            <person name="McWilliam S."/>
            <person name="Madan Babu M."/>
            <person name="Madera M."/>
            <person name="Marchionni L."/>
            <person name="Matsuda H."/>
            <person name="Matsuzawa S."/>
            <person name="Miki H."/>
            <person name="Mignone F."/>
            <person name="Miyake S."/>
            <person name="Morris K."/>
            <person name="Mottagui-Tabar S."/>
            <person name="Mulder N."/>
            <person name="Nakano N."/>
            <person name="Nakauchi H."/>
            <person name="Ng P."/>
            <person name="Nilsson R."/>
            <person name="Nishiguchi S."/>
            <person name="Nishikawa S."/>
            <person name="Nori F."/>
            <person name="Ohara O."/>
            <person name="Okazaki Y."/>
            <person name="Orlando V."/>
            <person name="Pang K.C."/>
            <person name="Pavan W.J."/>
            <person name="Pavesi G."/>
            <person name="Pesole G."/>
            <person name="Petrovsky N."/>
            <person name="Piazza S."/>
            <person name="Reed J."/>
            <person name="Reid J.F."/>
            <person name="Ring B.Z."/>
            <person name="Ringwald M."/>
            <person name="Rost B."/>
            <person name="Ruan Y."/>
            <person name="Salzberg S.L."/>
            <person name="Sandelin A."/>
            <person name="Schneider C."/>
            <person name="Schoenbach C."/>
            <person name="Sekiguchi K."/>
            <person name="Semple C.A."/>
            <person name="Seno S."/>
            <person name="Sessa L."/>
            <person name="Sheng Y."/>
            <person name="Shibata Y."/>
            <person name="Shimada H."/>
            <person name="Shimada K."/>
            <person name="Silva D."/>
            <person name="Sinclair B."/>
            <person name="Sperling S."/>
            <person name="Stupka E."/>
            <person name="Sugiura K."/>
            <person name="Sultana R."/>
            <person name="Takenaka Y."/>
            <person name="Taki K."/>
            <person name="Tammoja K."/>
            <person name="Tan S.L."/>
            <person name="Tang S."/>
            <person name="Taylor M.S."/>
            <person name="Tegner J."/>
            <person name="Teichmann S.A."/>
            <person name="Ueda H.R."/>
            <person name="van Nimwegen E."/>
            <person name="Verardo R."/>
            <person name="Wei C.L."/>
            <person name="Yagi K."/>
            <person name="Yamanishi H."/>
            <person name="Zabarovsky E."/>
            <person name="Zhu S."/>
            <person name="Zimmer A."/>
            <person name="Hide W."/>
            <person name="Bult C."/>
            <person name="Grimmond S.M."/>
            <person name="Teasdale R.D."/>
            <person name="Liu E.T."/>
            <person name="Brusic V."/>
            <person name="Quackenbush J."/>
            <person name="Wahlestedt C."/>
            <person name="Mattick J.S."/>
            <person name="Hume D.A."/>
            <person name="Kai C."/>
            <person name="Sasaki D."/>
            <person name="Tomaru Y."/>
            <person name="Fukuda S."/>
            <person name="Kanamori-Katayama M."/>
            <person name="Suzuki M."/>
            <person name="Aoki J."/>
            <person name="Arakawa T."/>
            <person name="Iida J."/>
            <person name="Imamura K."/>
            <person name="Itoh M."/>
            <person name="Kato T."/>
            <person name="Kawaji H."/>
            <person name="Kawagashira N."/>
            <person name="Kawashima T."/>
            <person name="Kojima M."/>
            <person name="Kondo S."/>
            <person name="Konno H."/>
            <person name="Nakano K."/>
            <person name="Ninomiya N."/>
            <person name="Nishio T."/>
            <person name="Okada M."/>
            <person name="Plessy C."/>
            <person name="Shibata K."/>
            <person name="Shiraki T."/>
            <person name="Suzuki S."/>
            <person name="Tagami M."/>
            <person name="Waki K."/>
            <person name="Watahiki A."/>
            <person name="Okamura-Oho Y."/>
            <person name="Suzuki H."/>
            <person name="Kawai J."/>
            <person name="Hayashizaki Y."/>
        </authorList>
    </citation>
    <scope>NUCLEOTIDE SEQUENCE [LARGE SCALE MRNA] (ISOFORMS 1 AND 2)</scope>
    <source>
        <strain>C57BL/6J</strain>
        <tissue>Egg</tissue>
        <tissue>Oviduct</tissue>
    </source>
</reference>
<reference key="4">
    <citation type="journal article" date="2004" name="Genome Res.">
        <title>The status, quality, and expansion of the NIH full-length cDNA project: the Mammalian Gene Collection (MGC).</title>
        <authorList>
            <consortium name="The MGC Project Team"/>
        </authorList>
    </citation>
    <scope>NUCLEOTIDE SEQUENCE [LARGE SCALE MRNA] (ISOFORM 1)</scope>
    <source>
        <strain>C57BL/6J</strain>
        <tissue>Brain</tissue>
    </source>
</reference>
<reference key="5">
    <citation type="journal article" date="2004" name="Dev. Biol.">
        <title>Comprehensive transcriptome analysis of differentiation of embryonic stem cells into midbrain and hindbrain neurons.</title>
        <authorList>
            <person name="Ahn J.-I."/>
            <person name="Lee K.-H."/>
            <person name="Shin D.-M."/>
            <person name="Shim J.-W."/>
            <person name="Lee J.-S."/>
            <person name="Chang S.Y."/>
            <person name="Lee Y.-S."/>
            <person name="Brownstein M.J."/>
            <person name="Lee S.-H."/>
            <person name="Lee Y.-S."/>
        </authorList>
    </citation>
    <scope>INDUCTION</scope>
</reference>
<reference key="6">
    <citation type="journal article" date="2005" name="Biochem. Biophys. Res. Commun.">
        <title>Identification of Zfp-57 as a downstream molecule of STAT3 and Oct-3/4 in embryonic stem cells.</title>
        <authorList>
            <person name="Akagi T."/>
            <person name="Usuda M."/>
            <person name="Matsuda T."/>
            <person name="Ko M.S.H."/>
            <person name="Niwa H."/>
            <person name="Asano M."/>
            <person name="Koide H."/>
            <person name="Yokota T."/>
        </authorList>
    </citation>
    <scope>INDUCTION</scope>
</reference>
<reference key="7">
    <citation type="journal article" date="2007" name="Genes Dev.">
        <title>Jmjd1a and Jmjd2c histone H3 Lys 9 demethylases regulate self-renewal in embryonic stem cells.</title>
        <authorList>
            <person name="Loh Y.-H."/>
            <person name="Zhang W."/>
            <person name="Chen X."/>
            <person name="George J."/>
            <person name="Ng H.H."/>
        </authorList>
    </citation>
    <scope>INDUCTION</scope>
</reference>
<reference key="8">
    <citation type="journal article" date="2008" name="Dev. Cell">
        <title>A maternal-zygotic effect gene, Zfp57, maintains both maternal and paternal imprints.</title>
        <authorList>
            <person name="Li X."/>
            <person name="Ito M."/>
            <person name="Zhou F."/>
            <person name="Youngson N."/>
            <person name="Zuo X."/>
            <person name="Leder P."/>
            <person name="Ferguson-Smith A.C."/>
        </authorList>
    </citation>
    <scope>FUNCTION</scope>
    <scope>DISRUPTION PHENOTYPE</scope>
    <scope>DEVELOPMENTAL STAGE</scope>
    <scope>SUBCELLULAR LOCATION</scope>
</reference>
<reference key="9">
    <citation type="journal article" date="2008" name="Nat. Genet.">
        <title>Hypomethylation of multiple imprinted loci in individuals with transient neonatal diabetes is associated with mutations in ZFP57.</title>
        <authorList>
            <person name="Mackay D.J.G."/>
            <person name="Callaway J.L.A."/>
            <person name="Marks S.M."/>
            <person name="White H.E."/>
            <person name="Acerini C.L."/>
            <person name="Boonen S.E."/>
            <person name="Dayanikli P."/>
            <person name="Firth H.V."/>
            <person name="Goodship J.A."/>
            <person name="Haemers A.P."/>
            <person name="Hahnemann J.M.D."/>
            <person name="Kordonouri O."/>
            <person name="Masoud A.F."/>
            <person name="Oestergaard E."/>
            <person name="Storr J."/>
            <person name="Ellard S."/>
            <person name="Hattersley A.T."/>
            <person name="Robinson D.O."/>
            <person name="Temple I.K."/>
        </authorList>
    </citation>
    <scope>DEVELOPMENTAL STAGE</scope>
</reference>
<reference key="10">
    <citation type="journal article" date="2019" name="Genes Dev.">
        <title>ZNF445 is a primary regulator of genomic imprinting.</title>
        <authorList>
            <person name="Takahashi N."/>
            <person name="Coluccio A."/>
            <person name="Thorball C.W."/>
            <person name="Planet E."/>
            <person name="Shi H."/>
            <person name="Offner S."/>
            <person name="Turelli P."/>
            <person name="Imbeault M."/>
            <person name="Ferguson-Smith A.C."/>
            <person name="Trono D."/>
        </authorList>
    </citation>
    <scope>FUNCTION</scope>
    <scope>DISRUPTION PHENOTYPE</scope>
</reference>
<reference key="11">
    <citation type="journal article" date="2012" name="Genes Dev.">
        <title>An atomic model of Zfp57 recognition of CpG methylation within a specific DNA sequence.</title>
        <authorList>
            <person name="Liu Y."/>
            <person name="Toh H."/>
            <person name="Sasaki H."/>
            <person name="Zhang X."/>
            <person name="Cheng X."/>
        </authorList>
    </citation>
    <scope>X-RAY CRYSTALLOGRAPHY (0.99 ANGSTROMS) OF 137-195 IN COMPLEX WITH METHYLATED DNA</scope>
    <scope>FUNCTION</scope>
</reference>
<name>ZFP57_MOUSE</name>
<feature type="chain" id="PRO_0000291965" description="Zinc finger protein 57">
    <location>
        <begin position="1"/>
        <end position="421"/>
    </location>
</feature>
<feature type="domain" description="KRAB" evidence="2">
    <location>
        <begin position="15"/>
        <end position="88"/>
    </location>
</feature>
<feature type="zinc finger region" description="C2H2-type 1; degenerate" evidence="1">
    <location>
        <begin position="90"/>
        <end position="113"/>
    </location>
</feature>
<feature type="zinc finger region" description="C2H2-type 2" evidence="1">
    <location>
        <begin position="140"/>
        <end position="162"/>
    </location>
</feature>
<feature type="zinc finger region" description="C2H2-type 3" evidence="1">
    <location>
        <begin position="168"/>
        <end position="190"/>
    </location>
</feature>
<feature type="zinc finger region" description="C2H2-type 4" evidence="1">
    <location>
        <begin position="264"/>
        <end position="286"/>
    </location>
</feature>
<feature type="zinc finger region" description="C2H2-type 5; degenerate" evidence="1">
    <location>
        <begin position="313"/>
        <end position="332"/>
    </location>
</feature>
<feature type="region of interest" description="Disordered" evidence="3">
    <location>
        <begin position="191"/>
        <end position="221"/>
    </location>
</feature>
<feature type="region of interest" description="Disordered" evidence="3">
    <location>
        <begin position="371"/>
        <end position="421"/>
    </location>
</feature>
<feature type="compositionally biased region" description="Low complexity" evidence="3">
    <location>
        <begin position="195"/>
        <end position="207"/>
    </location>
</feature>
<feature type="site" description="Crucial for 5-methylcytosine recognition">
    <location>
        <position position="178"/>
    </location>
</feature>
<feature type="splice variant" id="VSP_026331" description="In isoform 2." evidence="13">
    <location>
        <begin position="7"/>
        <end position="9"/>
    </location>
</feature>
<feature type="sequence conflict" description="In Ref. 1; BAA04876." evidence="14" ref="1">
    <original>E</original>
    <variation>K</variation>
    <location>
        <position position="75"/>
    </location>
</feature>
<feature type="turn" evidence="15">
    <location>
        <begin position="143"/>
        <end position="145"/>
    </location>
</feature>
<feature type="strand" evidence="15">
    <location>
        <begin position="148"/>
        <end position="151"/>
    </location>
</feature>
<feature type="helix" evidence="15">
    <location>
        <begin position="152"/>
        <end position="163"/>
    </location>
</feature>
<feature type="turn" evidence="15">
    <location>
        <begin position="171"/>
        <end position="173"/>
    </location>
</feature>
<feature type="strand" evidence="15">
    <location>
        <begin position="176"/>
        <end position="179"/>
    </location>
</feature>
<feature type="helix" evidence="15">
    <location>
        <begin position="180"/>
        <end position="186"/>
    </location>
</feature>
<feature type="helix" evidence="15">
    <location>
        <begin position="187"/>
        <end position="190"/>
    </location>
</feature>
<keyword id="KW-0002">3D-structure</keyword>
<keyword id="KW-0025">Alternative splicing</keyword>
<keyword id="KW-0217">Developmental protein</keyword>
<keyword id="KW-0238">DNA-binding</keyword>
<keyword id="KW-0479">Metal-binding</keyword>
<keyword id="KW-0539">Nucleus</keyword>
<keyword id="KW-1185">Reference proteome</keyword>
<keyword id="KW-0677">Repeat</keyword>
<keyword id="KW-0678">Repressor</keyword>
<keyword id="KW-0804">Transcription</keyword>
<keyword id="KW-0805">Transcription regulation</keyword>
<keyword id="KW-0862">Zinc</keyword>
<keyword id="KW-0863">Zinc-finger</keyword>
<protein>
    <recommendedName>
        <fullName>Zinc finger protein 57</fullName>
        <shortName>Zfp-57</shortName>
    </recommendedName>
</protein>